<reference key="1">
    <citation type="journal article" date="1995" name="Science">
        <title>Whole-genome random sequencing and assembly of Haemophilus influenzae Rd.</title>
        <authorList>
            <person name="Fleischmann R.D."/>
            <person name="Adams M.D."/>
            <person name="White O."/>
            <person name="Clayton R.A."/>
            <person name="Kirkness E.F."/>
            <person name="Kerlavage A.R."/>
            <person name="Bult C.J."/>
            <person name="Tomb J.-F."/>
            <person name="Dougherty B.A."/>
            <person name="Merrick J.M."/>
            <person name="McKenney K."/>
            <person name="Sutton G.G."/>
            <person name="FitzHugh W."/>
            <person name="Fields C.A."/>
            <person name="Gocayne J.D."/>
            <person name="Scott J.D."/>
            <person name="Shirley R."/>
            <person name="Liu L.-I."/>
            <person name="Glodek A."/>
            <person name="Kelley J.M."/>
            <person name="Weidman J.F."/>
            <person name="Phillips C.A."/>
            <person name="Spriggs T."/>
            <person name="Hedblom E."/>
            <person name="Cotton M.D."/>
            <person name="Utterback T.R."/>
            <person name="Hanna M.C."/>
            <person name="Nguyen D.T."/>
            <person name="Saudek D.M."/>
            <person name="Brandon R.C."/>
            <person name="Fine L.D."/>
            <person name="Fritchman J.L."/>
            <person name="Fuhrmann J.L."/>
            <person name="Geoghagen N.S.M."/>
            <person name="Gnehm C.L."/>
            <person name="McDonald L.A."/>
            <person name="Small K.V."/>
            <person name="Fraser C.M."/>
            <person name="Smith H.O."/>
            <person name="Venter J.C."/>
        </authorList>
    </citation>
    <scope>NUCLEOTIDE SEQUENCE [LARGE SCALE GENOMIC DNA]</scope>
    <source>
        <strain>ATCC 51907 / DSM 11121 / KW20 / Rd</strain>
    </source>
</reference>
<organism>
    <name type="scientific">Haemophilus influenzae (strain ATCC 51907 / DSM 11121 / KW20 / Rd)</name>
    <dbReference type="NCBI Taxonomy" id="71421"/>
    <lineage>
        <taxon>Bacteria</taxon>
        <taxon>Pseudomonadati</taxon>
        <taxon>Pseudomonadota</taxon>
        <taxon>Gammaproteobacteria</taxon>
        <taxon>Pasteurellales</taxon>
        <taxon>Pasteurellaceae</taxon>
        <taxon>Haemophilus</taxon>
    </lineage>
</organism>
<dbReference type="EMBL" id="L42023">
    <property type="protein sequence ID" value="AAC23030.1"/>
    <property type="molecule type" value="Genomic_DNA"/>
</dbReference>
<dbReference type="PIR" id="I64026">
    <property type="entry name" value="I64026"/>
</dbReference>
<dbReference type="RefSeq" id="NP_439528.1">
    <property type="nucleotide sequence ID" value="NC_000907.1"/>
</dbReference>
<dbReference type="SMR" id="P44170"/>
<dbReference type="STRING" id="71421.HI_1376"/>
<dbReference type="EnsemblBacteria" id="AAC23030">
    <property type="protein sequence ID" value="AAC23030"/>
    <property type="gene ID" value="HI_1376"/>
</dbReference>
<dbReference type="KEGG" id="hin:HI_1376"/>
<dbReference type="PATRIC" id="fig|71421.8.peg.1431"/>
<dbReference type="eggNOG" id="COG0697">
    <property type="taxonomic scope" value="Bacteria"/>
</dbReference>
<dbReference type="HOGENOM" id="CLU_062241_0_0_6"/>
<dbReference type="OrthoDB" id="1524053at2"/>
<dbReference type="BioCyc" id="HINF71421:G1GJ1-1402-MONOMER"/>
<dbReference type="Proteomes" id="UP000000579">
    <property type="component" value="Chromosome"/>
</dbReference>
<dbReference type="GO" id="GO:0016020">
    <property type="term" value="C:membrane"/>
    <property type="evidence" value="ECO:0000318"/>
    <property type="project" value="GO_Central"/>
</dbReference>
<dbReference type="GO" id="GO:0005886">
    <property type="term" value="C:plasma membrane"/>
    <property type="evidence" value="ECO:0007669"/>
    <property type="project" value="UniProtKB-SubCell"/>
</dbReference>
<dbReference type="SUPFAM" id="SSF103481">
    <property type="entry name" value="Multidrug resistance efflux transporter EmrE"/>
    <property type="match status" value="2"/>
</dbReference>
<accession>P44170</accession>
<comment type="subcellular location">
    <subcellularLocation>
        <location evidence="2">Cell membrane</location>
        <topology evidence="2">Multi-pass membrane protein</topology>
    </subcellularLocation>
</comment>
<sequence length="291" mass="31916">MHNLIFAILCSVAVSVLLKIARKKNIIIEQAIAFNYITAITFSYFLLKPDFKGLEFTDYIAQSENSPIFLALGLLLPSVFIIMSKAVEFAGIVRSDAAQRLSLFLPILAAFLIFHETLSQSKIIGVVLAFIGLFCLLTKPTQGQSAVNFKGVLGLIGVWFGYGIIDILFKQVAKSGGAFPATLFISFSLAACVMFIYLFLKRVQWTSSSVIGGIVLGVLNFFNILFYIKAHQSFAGNPTLVFAGMNIGVICLGTITGALVFKERISKLNWLGIIFSLSAIFCLYYLDKIIA</sequence>
<keyword id="KW-1003">Cell membrane</keyword>
<keyword id="KW-0472">Membrane</keyword>
<keyword id="KW-1185">Reference proteome</keyword>
<keyword id="KW-0812">Transmembrane</keyword>
<keyword id="KW-1133">Transmembrane helix</keyword>
<proteinExistence type="predicted"/>
<protein>
    <recommendedName>
        <fullName>Uncharacterized protein HI_1376</fullName>
    </recommendedName>
</protein>
<name>Y1376_HAEIN</name>
<evidence type="ECO:0000255" key="1"/>
<evidence type="ECO:0000305" key="2"/>
<gene>
    <name type="ordered locus">HI_1376</name>
</gene>
<feature type="chain" id="PRO_0000078033" description="Uncharacterized protein HI_1376">
    <location>
        <begin position="1"/>
        <end position="291"/>
    </location>
</feature>
<feature type="transmembrane region" description="Helical" evidence="1">
    <location>
        <begin position="1"/>
        <end position="21"/>
    </location>
</feature>
<feature type="transmembrane region" description="Helical" evidence="1">
    <location>
        <begin position="26"/>
        <end position="46"/>
    </location>
</feature>
<feature type="transmembrane region" description="Helical" evidence="1">
    <location>
        <begin position="67"/>
        <end position="87"/>
    </location>
</feature>
<feature type="transmembrane region" description="Helical" evidence="1">
    <location>
        <begin position="95"/>
        <end position="115"/>
    </location>
</feature>
<feature type="transmembrane region" description="Helical" evidence="1">
    <location>
        <begin position="117"/>
        <end position="137"/>
    </location>
</feature>
<feature type="transmembrane region" description="Helical" evidence="1">
    <location>
        <begin position="149"/>
        <end position="169"/>
    </location>
</feature>
<feature type="transmembrane region" description="Helical" evidence="1">
    <location>
        <begin position="179"/>
        <end position="199"/>
    </location>
</feature>
<feature type="transmembrane region" description="Helical" evidence="1">
    <location>
        <begin position="208"/>
        <end position="228"/>
    </location>
</feature>
<feature type="transmembrane region" description="Helical" evidence="1">
    <location>
        <begin position="241"/>
        <end position="261"/>
    </location>
</feature>
<feature type="transmembrane region" description="Helical" evidence="1">
    <location>
        <begin position="270"/>
        <end position="290"/>
    </location>
</feature>
<feature type="domain" description="EamA">
    <location>
        <begin position="107"/>
        <end position="138"/>
    </location>
</feature>